<accession>Q8ZCD0</accession>
<accession>Q0WCK6</accession>
<organism>
    <name type="scientific">Yersinia pestis</name>
    <dbReference type="NCBI Taxonomy" id="632"/>
    <lineage>
        <taxon>Bacteria</taxon>
        <taxon>Pseudomonadati</taxon>
        <taxon>Pseudomonadota</taxon>
        <taxon>Gammaproteobacteria</taxon>
        <taxon>Enterobacterales</taxon>
        <taxon>Yersiniaceae</taxon>
        <taxon>Yersinia</taxon>
    </lineage>
</organism>
<protein>
    <recommendedName>
        <fullName evidence="1">4-hydroxy-tetrahydrodipicolinate synthase</fullName>
        <shortName evidence="1">HTPA synthase</shortName>
        <ecNumber evidence="1">4.3.3.7</ecNumber>
    </recommendedName>
</protein>
<evidence type="ECO:0000255" key="1">
    <source>
        <dbReference type="HAMAP-Rule" id="MF_00418"/>
    </source>
</evidence>
<evidence type="ECO:0000305" key="2"/>
<gene>
    <name evidence="1" type="primary">dapA</name>
    <name type="ordered locus">YPO3062</name>
    <name type="ordered locus">y1418</name>
    <name type="ordered locus">YP_2684</name>
</gene>
<keyword id="KW-0028">Amino-acid biosynthesis</keyword>
<keyword id="KW-0963">Cytoplasm</keyword>
<keyword id="KW-0220">Diaminopimelate biosynthesis</keyword>
<keyword id="KW-0456">Lyase</keyword>
<keyword id="KW-0457">Lysine biosynthesis</keyword>
<keyword id="KW-1185">Reference proteome</keyword>
<keyword id="KW-0704">Schiff base</keyword>
<proteinExistence type="inferred from homology"/>
<comment type="function">
    <text evidence="1">Catalyzes the condensation of (S)-aspartate-beta-semialdehyde [(S)-ASA] and pyruvate to 4-hydroxy-tetrahydrodipicolinate (HTPA).</text>
</comment>
<comment type="catalytic activity">
    <reaction evidence="1">
        <text>L-aspartate 4-semialdehyde + pyruvate = (2S,4S)-4-hydroxy-2,3,4,5-tetrahydrodipicolinate + H2O + H(+)</text>
        <dbReference type="Rhea" id="RHEA:34171"/>
        <dbReference type="ChEBI" id="CHEBI:15361"/>
        <dbReference type="ChEBI" id="CHEBI:15377"/>
        <dbReference type="ChEBI" id="CHEBI:15378"/>
        <dbReference type="ChEBI" id="CHEBI:67139"/>
        <dbReference type="ChEBI" id="CHEBI:537519"/>
        <dbReference type="EC" id="4.3.3.7"/>
    </reaction>
</comment>
<comment type="pathway">
    <text evidence="1">Amino-acid biosynthesis; L-lysine biosynthesis via DAP pathway; (S)-tetrahydrodipicolinate from L-aspartate: step 3/4.</text>
</comment>
<comment type="subunit">
    <text evidence="1">Homotetramer; dimer of dimers.</text>
</comment>
<comment type="subcellular location">
    <subcellularLocation>
        <location evidence="1">Cytoplasm</location>
    </subcellularLocation>
</comment>
<comment type="similarity">
    <text evidence="1">Belongs to the DapA family.</text>
</comment>
<comment type="caution">
    <text evidence="2">Was originally thought to be a dihydrodipicolinate synthase (DHDPS), catalyzing the condensation of (S)-aspartate-beta-semialdehyde [(S)-ASA] and pyruvate to dihydrodipicolinate (DHDP). However, it was shown in E.coli that the product of the enzymatic reaction is not dihydrodipicolinate but in fact (4S)-4-hydroxy-2,3,4,5-tetrahydro-(2S)-dipicolinic acid (HTPA), and that the consecutive dehydration reaction leading to DHDP is not spontaneous but catalyzed by DapB.</text>
</comment>
<comment type="sequence caution" evidence="2">
    <conflict type="erroneous initiation">
        <sequence resource="EMBL-CDS" id="AAM84990"/>
    </conflict>
</comment>
<comment type="sequence caution" evidence="2">
    <conflict type="erroneous initiation">
        <sequence resource="EMBL-CDS" id="AAS62874"/>
    </conflict>
</comment>
<name>DAPA_YERPE</name>
<dbReference type="EC" id="4.3.3.7" evidence="1"/>
<dbReference type="EMBL" id="AL590842">
    <property type="protein sequence ID" value="CAL21664.1"/>
    <property type="molecule type" value="Genomic_DNA"/>
</dbReference>
<dbReference type="EMBL" id="AE009952">
    <property type="protein sequence ID" value="AAM84990.1"/>
    <property type="status" value="ALT_INIT"/>
    <property type="molecule type" value="Genomic_DNA"/>
</dbReference>
<dbReference type="EMBL" id="AE017042">
    <property type="protein sequence ID" value="AAS62874.1"/>
    <property type="status" value="ALT_INIT"/>
    <property type="molecule type" value="Genomic_DNA"/>
</dbReference>
<dbReference type="PIR" id="AE0372">
    <property type="entry name" value="AE0372"/>
</dbReference>
<dbReference type="RefSeq" id="WP_002227834.1">
    <property type="nucleotide sequence ID" value="NZ_WUCM01000113.1"/>
</dbReference>
<dbReference type="RefSeq" id="YP_002347982.1">
    <property type="nucleotide sequence ID" value="NC_003143.1"/>
</dbReference>
<dbReference type="SMR" id="Q8ZCD0"/>
<dbReference type="STRING" id="214092.YPO3062"/>
<dbReference type="PaxDb" id="214092-YPO3062"/>
<dbReference type="DNASU" id="1146365"/>
<dbReference type="EnsemblBacteria" id="AAS62874">
    <property type="protein sequence ID" value="AAS62874"/>
    <property type="gene ID" value="YP_2684"/>
</dbReference>
<dbReference type="GeneID" id="96666278"/>
<dbReference type="KEGG" id="ype:YPO3062"/>
<dbReference type="KEGG" id="ypj:CH55_4004"/>
<dbReference type="KEGG" id="ypk:y1418"/>
<dbReference type="KEGG" id="ypl:CH46_2038"/>
<dbReference type="KEGG" id="ypm:YP_2684"/>
<dbReference type="KEGG" id="ypv:BZ15_466"/>
<dbReference type="KEGG" id="ypw:CH59_3005"/>
<dbReference type="PATRIC" id="fig|214092.21.peg.3518"/>
<dbReference type="eggNOG" id="COG0329">
    <property type="taxonomic scope" value="Bacteria"/>
</dbReference>
<dbReference type="HOGENOM" id="CLU_049343_7_1_6"/>
<dbReference type="OrthoDB" id="9782828at2"/>
<dbReference type="UniPathway" id="UPA00034">
    <property type="reaction ID" value="UER00017"/>
</dbReference>
<dbReference type="Proteomes" id="UP000000815">
    <property type="component" value="Chromosome"/>
</dbReference>
<dbReference type="Proteomes" id="UP000001019">
    <property type="component" value="Chromosome"/>
</dbReference>
<dbReference type="Proteomes" id="UP000002490">
    <property type="component" value="Chromosome"/>
</dbReference>
<dbReference type="GO" id="GO:0005829">
    <property type="term" value="C:cytosol"/>
    <property type="evidence" value="ECO:0000318"/>
    <property type="project" value="GO_Central"/>
</dbReference>
<dbReference type="GO" id="GO:0008840">
    <property type="term" value="F:4-hydroxy-tetrahydrodipicolinate synthase activity"/>
    <property type="evidence" value="ECO:0000318"/>
    <property type="project" value="GO_Central"/>
</dbReference>
<dbReference type="GO" id="GO:0019877">
    <property type="term" value="P:diaminopimelate biosynthetic process"/>
    <property type="evidence" value="ECO:0007669"/>
    <property type="project" value="UniProtKB-UniRule"/>
</dbReference>
<dbReference type="GO" id="GO:0009089">
    <property type="term" value="P:lysine biosynthetic process via diaminopimelate"/>
    <property type="evidence" value="ECO:0007669"/>
    <property type="project" value="UniProtKB-UniRule"/>
</dbReference>
<dbReference type="CDD" id="cd00950">
    <property type="entry name" value="DHDPS"/>
    <property type="match status" value="1"/>
</dbReference>
<dbReference type="FunFam" id="3.20.20.70:FF:000046">
    <property type="entry name" value="4-hydroxy-tetrahydrodipicolinate synthase"/>
    <property type="match status" value="1"/>
</dbReference>
<dbReference type="Gene3D" id="3.20.20.70">
    <property type="entry name" value="Aldolase class I"/>
    <property type="match status" value="1"/>
</dbReference>
<dbReference type="HAMAP" id="MF_00418">
    <property type="entry name" value="DapA"/>
    <property type="match status" value="1"/>
</dbReference>
<dbReference type="InterPro" id="IPR013785">
    <property type="entry name" value="Aldolase_TIM"/>
</dbReference>
<dbReference type="InterPro" id="IPR005263">
    <property type="entry name" value="DapA"/>
</dbReference>
<dbReference type="InterPro" id="IPR002220">
    <property type="entry name" value="DapA-like"/>
</dbReference>
<dbReference type="InterPro" id="IPR020625">
    <property type="entry name" value="Schiff_base-form_aldolases_AS"/>
</dbReference>
<dbReference type="InterPro" id="IPR020624">
    <property type="entry name" value="Schiff_base-form_aldolases_CS"/>
</dbReference>
<dbReference type="NCBIfam" id="TIGR00674">
    <property type="entry name" value="dapA"/>
    <property type="match status" value="1"/>
</dbReference>
<dbReference type="PANTHER" id="PTHR12128:SF66">
    <property type="entry name" value="4-HYDROXY-2-OXOGLUTARATE ALDOLASE, MITOCHONDRIAL"/>
    <property type="match status" value="1"/>
</dbReference>
<dbReference type="PANTHER" id="PTHR12128">
    <property type="entry name" value="DIHYDRODIPICOLINATE SYNTHASE"/>
    <property type="match status" value="1"/>
</dbReference>
<dbReference type="Pfam" id="PF00701">
    <property type="entry name" value="DHDPS"/>
    <property type="match status" value="1"/>
</dbReference>
<dbReference type="PIRSF" id="PIRSF001365">
    <property type="entry name" value="DHDPS"/>
    <property type="match status" value="1"/>
</dbReference>
<dbReference type="PRINTS" id="PR00146">
    <property type="entry name" value="DHPICSNTHASE"/>
</dbReference>
<dbReference type="SMART" id="SM01130">
    <property type="entry name" value="DHDPS"/>
    <property type="match status" value="1"/>
</dbReference>
<dbReference type="SUPFAM" id="SSF51569">
    <property type="entry name" value="Aldolase"/>
    <property type="match status" value="1"/>
</dbReference>
<dbReference type="PROSITE" id="PS00665">
    <property type="entry name" value="DHDPS_1"/>
    <property type="match status" value="1"/>
</dbReference>
<dbReference type="PROSITE" id="PS00666">
    <property type="entry name" value="DHDPS_2"/>
    <property type="match status" value="1"/>
</dbReference>
<feature type="chain" id="PRO_0000103190" description="4-hydroxy-tetrahydrodipicolinate synthase">
    <location>
        <begin position="1"/>
        <end position="293"/>
    </location>
</feature>
<feature type="active site" description="Proton donor/acceptor" evidence="1">
    <location>
        <position position="133"/>
    </location>
</feature>
<feature type="active site" description="Schiff-base intermediate with substrate" evidence="1">
    <location>
        <position position="161"/>
    </location>
</feature>
<feature type="binding site" evidence="1">
    <location>
        <position position="45"/>
    </location>
    <ligand>
        <name>pyruvate</name>
        <dbReference type="ChEBI" id="CHEBI:15361"/>
    </ligand>
</feature>
<feature type="binding site" evidence="1">
    <location>
        <position position="204"/>
    </location>
    <ligand>
        <name>pyruvate</name>
        <dbReference type="ChEBI" id="CHEBI:15361"/>
    </ligand>
</feature>
<feature type="site" description="Part of a proton relay during catalysis" evidence="1">
    <location>
        <position position="44"/>
    </location>
</feature>
<feature type="site" description="Part of a proton relay during catalysis" evidence="1">
    <location>
        <position position="107"/>
    </location>
</feature>
<sequence length="293" mass="31426">MFTGSIVALITPMDDNGDVDRASLKSLIDYHVASGTAAIVSVGTTGESATLNHDEHVDVVMQTLELADGRIPVIAGTGANSTSEAISLTQRFNDTGVVGCLTVTPYYNRPMQEGLYQHFKAIAESTDLPQILYNVPSRTGCDMLPPTIARLAKIKNIVAVKEATGNLSRVSQIQVLVDDEDFILLSGDDASGLDFMQLGGKGVISVTANIAAREMVELCALAAQGNFAEGRRLNQRLMPLHQHLFVEANPIPVKWAAKRLGLMANDTMRLPMTPLTDPAKRIVEDALKSAGLL</sequence>
<reference key="1">
    <citation type="journal article" date="2001" name="Nature">
        <title>Genome sequence of Yersinia pestis, the causative agent of plague.</title>
        <authorList>
            <person name="Parkhill J."/>
            <person name="Wren B.W."/>
            <person name="Thomson N.R."/>
            <person name="Titball R.W."/>
            <person name="Holden M.T.G."/>
            <person name="Prentice M.B."/>
            <person name="Sebaihia M."/>
            <person name="James K.D."/>
            <person name="Churcher C.M."/>
            <person name="Mungall K.L."/>
            <person name="Baker S."/>
            <person name="Basham D."/>
            <person name="Bentley S.D."/>
            <person name="Brooks K."/>
            <person name="Cerdeno-Tarraga A.-M."/>
            <person name="Chillingworth T."/>
            <person name="Cronin A."/>
            <person name="Davies R.M."/>
            <person name="Davis P."/>
            <person name="Dougan G."/>
            <person name="Feltwell T."/>
            <person name="Hamlin N."/>
            <person name="Holroyd S."/>
            <person name="Jagels K."/>
            <person name="Karlyshev A.V."/>
            <person name="Leather S."/>
            <person name="Moule S."/>
            <person name="Oyston P.C.F."/>
            <person name="Quail M.A."/>
            <person name="Rutherford K.M."/>
            <person name="Simmonds M."/>
            <person name="Skelton J."/>
            <person name="Stevens K."/>
            <person name="Whitehead S."/>
            <person name="Barrell B.G."/>
        </authorList>
    </citation>
    <scope>NUCLEOTIDE SEQUENCE [LARGE SCALE GENOMIC DNA]</scope>
    <source>
        <strain>CO-92 / Biovar Orientalis</strain>
    </source>
</reference>
<reference key="2">
    <citation type="journal article" date="2002" name="J. Bacteriol.">
        <title>Genome sequence of Yersinia pestis KIM.</title>
        <authorList>
            <person name="Deng W."/>
            <person name="Burland V."/>
            <person name="Plunkett G. III"/>
            <person name="Boutin A."/>
            <person name="Mayhew G.F."/>
            <person name="Liss P."/>
            <person name="Perna N.T."/>
            <person name="Rose D.J."/>
            <person name="Mau B."/>
            <person name="Zhou S."/>
            <person name="Schwartz D.C."/>
            <person name="Fetherston J.D."/>
            <person name="Lindler L.E."/>
            <person name="Brubaker R.R."/>
            <person name="Plano G.V."/>
            <person name="Straley S.C."/>
            <person name="McDonough K.A."/>
            <person name="Nilles M.L."/>
            <person name="Matson J.S."/>
            <person name="Blattner F.R."/>
            <person name="Perry R.D."/>
        </authorList>
    </citation>
    <scope>NUCLEOTIDE SEQUENCE [LARGE SCALE GENOMIC DNA]</scope>
    <source>
        <strain>KIM10+ / Biovar Mediaevalis</strain>
    </source>
</reference>
<reference key="3">
    <citation type="journal article" date="2004" name="DNA Res.">
        <title>Complete genome sequence of Yersinia pestis strain 91001, an isolate avirulent to humans.</title>
        <authorList>
            <person name="Song Y."/>
            <person name="Tong Z."/>
            <person name="Wang J."/>
            <person name="Wang L."/>
            <person name="Guo Z."/>
            <person name="Han Y."/>
            <person name="Zhang J."/>
            <person name="Pei D."/>
            <person name="Zhou D."/>
            <person name="Qin H."/>
            <person name="Pang X."/>
            <person name="Han Y."/>
            <person name="Zhai J."/>
            <person name="Li M."/>
            <person name="Cui B."/>
            <person name="Qi Z."/>
            <person name="Jin L."/>
            <person name="Dai R."/>
            <person name="Chen F."/>
            <person name="Li S."/>
            <person name="Ye C."/>
            <person name="Du Z."/>
            <person name="Lin W."/>
            <person name="Wang J."/>
            <person name="Yu J."/>
            <person name="Yang H."/>
            <person name="Wang J."/>
            <person name="Huang P."/>
            <person name="Yang R."/>
        </authorList>
    </citation>
    <scope>NUCLEOTIDE SEQUENCE [LARGE SCALE GENOMIC DNA]</scope>
    <source>
        <strain>91001 / Biovar Mediaevalis</strain>
    </source>
</reference>